<feature type="chain" id="PRO_0000404216" description="ATP-dependent kinase YFH7">
    <location>
        <begin position="1"/>
        <end position="353"/>
    </location>
</feature>
<feature type="binding site" evidence="1">
    <location>
        <begin position="31"/>
        <end position="39"/>
    </location>
    <ligand>
        <name>ATP</name>
        <dbReference type="ChEBI" id="CHEBI:30616"/>
    </ligand>
</feature>
<protein>
    <recommendedName>
        <fullName>ATP-dependent kinase YFH7</fullName>
        <ecNumber>2.7.1.-</ecNumber>
    </recommendedName>
    <alternativeName>
        <fullName>Altered inheritance of mitochondria protein 12</fullName>
    </alternativeName>
</protein>
<proteinExistence type="inferred from homology"/>
<gene>
    <name type="primary">YFH7</name>
    <name type="synonym">AIM12</name>
    <name type="ORF">AWRI1631_60690</name>
</gene>
<sequence length="353" mass="39930">MVDTHKLADDVLQLLDNRIEDNYRVCVILVGSPGSGKSTIAEELCQIINEKYHTFLSEHPNVIEVNDRLKPMVNLVDSLKTLQPNEVAEMIENQGLFKDHVEDVNFQPIKYSALTSNNEECTAVVARGGTANAIRIATVDNPVNVNKLAQDSINIAQIVPMDGFHLSRRCLDLFKDPQTAHKRRGSPSTFDSNNFLQLCKILAKTSLCKVSSHHKFYSTSSVFEKLSKTFSQTIPDIFVPGFNHALKDPTPDQYCISKFTRIVILEGLYLLYDQENWKKIYKTLADTGALLVYKIDIDYEATEERVAKRHLQSGLVTTIAEGREKFRSNDLLNGRDIDNHLIKVDNIVHIRND</sequence>
<reference key="1">
    <citation type="journal article" date="2008" name="FEMS Yeast Res.">
        <title>Comparative genome analysis of a Saccharomyces cerevisiae wine strain.</title>
        <authorList>
            <person name="Borneman A.R."/>
            <person name="Forgan A.H."/>
            <person name="Pretorius I.S."/>
            <person name="Chambers P.J."/>
        </authorList>
    </citation>
    <scope>NUCLEOTIDE SEQUENCE [LARGE SCALE GENOMIC DNA]</scope>
    <source>
        <strain>AWRI1631</strain>
    </source>
</reference>
<keyword id="KW-0067">ATP-binding</keyword>
<keyword id="KW-0418">Kinase</keyword>
<keyword id="KW-0547">Nucleotide-binding</keyword>
<keyword id="KW-0808">Transferase</keyword>
<accession>B5VI33</accession>
<comment type="function">
    <text evidence="1">ATP-dependent kinase that could be involved in endoplasmic reticulum membrane assembly.</text>
</comment>
<comment type="similarity">
    <text evidence="2">Belongs to the YFH7 family.</text>
</comment>
<dbReference type="EC" id="2.7.1.-"/>
<dbReference type="EMBL" id="ABSV01000781">
    <property type="protein sequence ID" value="EDZ72417.1"/>
    <property type="molecule type" value="Genomic_DNA"/>
</dbReference>
<dbReference type="SMR" id="B5VI33"/>
<dbReference type="Proteomes" id="UP000008988">
    <property type="component" value="Unassembled WGS sequence"/>
</dbReference>
<dbReference type="GO" id="GO:0005524">
    <property type="term" value="F:ATP binding"/>
    <property type="evidence" value="ECO:0007669"/>
    <property type="project" value="UniProtKB-KW"/>
</dbReference>
<dbReference type="GO" id="GO:0016301">
    <property type="term" value="F:kinase activity"/>
    <property type="evidence" value="ECO:0007669"/>
    <property type="project" value="UniProtKB-KW"/>
</dbReference>
<dbReference type="CDD" id="cd00009">
    <property type="entry name" value="AAA"/>
    <property type="match status" value="1"/>
</dbReference>
<dbReference type="FunFam" id="3.40.50.300:FF:002630">
    <property type="entry name" value="ATP-dependent kinase YFH7"/>
    <property type="match status" value="1"/>
</dbReference>
<dbReference type="Gene3D" id="3.40.50.300">
    <property type="entry name" value="P-loop containing nucleotide triphosphate hydrolases"/>
    <property type="match status" value="1"/>
</dbReference>
<dbReference type="InterPro" id="IPR027417">
    <property type="entry name" value="P-loop_NTPase"/>
</dbReference>
<dbReference type="PANTHER" id="PTHR10285">
    <property type="entry name" value="URIDINE KINASE"/>
    <property type="match status" value="1"/>
</dbReference>
<dbReference type="SUPFAM" id="SSF52540">
    <property type="entry name" value="P-loop containing nucleoside triphosphate hydrolases"/>
    <property type="match status" value="2"/>
</dbReference>
<name>YFH7_YEAS6</name>
<organism>
    <name type="scientific">Saccharomyces cerevisiae (strain AWRI1631)</name>
    <name type="common">Baker's yeast</name>
    <dbReference type="NCBI Taxonomy" id="545124"/>
    <lineage>
        <taxon>Eukaryota</taxon>
        <taxon>Fungi</taxon>
        <taxon>Dikarya</taxon>
        <taxon>Ascomycota</taxon>
        <taxon>Saccharomycotina</taxon>
        <taxon>Saccharomycetes</taxon>
        <taxon>Saccharomycetales</taxon>
        <taxon>Saccharomycetaceae</taxon>
        <taxon>Saccharomyces</taxon>
    </lineage>
</organism>
<evidence type="ECO:0000250" key="1"/>
<evidence type="ECO:0000305" key="2"/>